<evidence type="ECO:0000250" key="1">
    <source>
        <dbReference type="UniProtKB" id="P03897"/>
    </source>
</evidence>
<evidence type="ECO:0000250" key="2">
    <source>
        <dbReference type="UniProtKB" id="P03898"/>
    </source>
</evidence>
<evidence type="ECO:0000255" key="3"/>
<evidence type="ECO:0000305" key="4"/>
<evidence type="ECO:0000312" key="5">
    <source>
        <dbReference type="Proteomes" id="UP000001811"/>
    </source>
</evidence>
<reference key="1">
    <citation type="journal article" date="1998" name="Genomics">
        <title>The complete mitochondrial DNA sequence of the rabbit, Oryctolagus cuniculus.</title>
        <authorList>
            <person name="Gissi C."/>
            <person name="Gullberg A."/>
            <person name="Arnason U."/>
        </authorList>
    </citation>
    <scope>NUCLEOTIDE SEQUENCE [LARGE SCALE GENOMIC DNA]</scope>
    <source>
        <strain evidence="5">Thorbecke</strain>
    </source>
</reference>
<proteinExistence type="inferred from homology"/>
<sequence>MNLMLVLLINTTISLVLVTIAFWLPQLNIYSEKSSPYECGFDPMGSARLPFSMKFFLVAITFLLFDLEIALLLPLPWAAQFNNLNLVLIMALMLISILALGLAYEWIQKGLEWVE</sequence>
<accession>O79434</accession>
<comment type="function">
    <text evidence="1">Core subunit of the mitochondrial membrane respiratory chain NADH dehydrogenase (Complex I) which catalyzes electron transfer from NADH through the respiratory chain, using ubiquinone as an electron acceptor. Essential for the catalytic activity of complex I.</text>
</comment>
<comment type="catalytic activity">
    <reaction evidence="1">
        <text>a ubiquinone + NADH + 5 H(+)(in) = a ubiquinol + NAD(+) + 4 H(+)(out)</text>
        <dbReference type="Rhea" id="RHEA:29091"/>
        <dbReference type="Rhea" id="RHEA-COMP:9565"/>
        <dbReference type="Rhea" id="RHEA-COMP:9566"/>
        <dbReference type="ChEBI" id="CHEBI:15378"/>
        <dbReference type="ChEBI" id="CHEBI:16389"/>
        <dbReference type="ChEBI" id="CHEBI:17976"/>
        <dbReference type="ChEBI" id="CHEBI:57540"/>
        <dbReference type="ChEBI" id="CHEBI:57945"/>
        <dbReference type="EC" id="7.1.1.2"/>
    </reaction>
</comment>
<comment type="subunit">
    <text evidence="1">Core subunit of respiratory chain NADH dehydrogenase (Complex I) which is composed of 45 different subunits. Interacts with TMEM186. Interacts with TMEM242 (By similarity).</text>
</comment>
<comment type="subcellular location">
    <subcellularLocation>
        <location evidence="2">Mitochondrion inner membrane</location>
        <topology evidence="3">Multi-pass membrane protein</topology>
    </subcellularLocation>
</comment>
<comment type="similarity">
    <text evidence="4">Belongs to the complex I subunit 3 family.</text>
</comment>
<organism>
    <name type="scientific">Oryctolagus cuniculus</name>
    <name type="common">Rabbit</name>
    <dbReference type="NCBI Taxonomy" id="9986"/>
    <lineage>
        <taxon>Eukaryota</taxon>
        <taxon>Metazoa</taxon>
        <taxon>Chordata</taxon>
        <taxon>Craniata</taxon>
        <taxon>Vertebrata</taxon>
        <taxon>Euteleostomi</taxon>
        <taxon>Mammalia</taxon>
        <taxon>Eutheria</taxon>
        <taxon>Euarchontoglires</taxon>
        <taxon>Glires</taxon>
        <taxon>Lagomorpha</taxon>
        <taxon>Leporidae</taxon>
        <taxon>Oryctolagus</taxon>
    </lineage>
</organism>
<geneLocation type="mitochondrion"/>
<name>NU3M_RABIT</name>
<feature type="chain" id="PRO_0000117816" description="NADH-ubiquinone oxidoreductase chain 3">
    <location>
        <begin position="1"/>
        <end position="115"/>
    </location>
</feature>
<feature type="transmembrane region" description="Helical" evidence="3">
    <location>
        <begin position="3"/>
        <end position="23"/>
    </location>
</feature>
<feature type="transmembrane region" description="Helical" evidence="3">
    <location>
        <begin position="55"/>
        <end position="75"/>
    </location>
</feature>
<feature type="transmembrane region" description="Helical" evidence="3">
    <location>
        <begin position="87"/>
        <end position="107"/>
    </location>
</feature>
<gene>
    <name evidence="1" type="primary">MT-ND3</name>
    <name type="synonym">MTND3</name>
    <name type="synonym">NADH3</name>
    <name type="synonym">ND3</name>
</gene>
<dbReference type="EC" id="7.1.1.2" evidence="1"/>
<dbReference type="EMBL" id="AJ001588">
    <property type="protein sequence ID" value="CAA04854.1"/>
    <property type="molecule type" value="Genomic_DNA"/>
</dbReference>
<dbReference type="PIR" id="T11487">
    <property type="entry name" value="T11487"/>
</dbReference>
<dbReference type="RefSeq" id="NP_007556.1">
    <property type="nucleotide sequence ID" value="NC_001913.1"/>
</dbReference>
<dbReference type="SMR" id="O79434"/>
<dbReference type="FunCoup" id="O79434">
    <property type="interactions" value="55"/>
</dbReference>
<dbReference type="STRING" id="9986.ENSOCUP00000026186"/>
<dbReference type="PaxDb" id="9986-ENSOCUP00000026186"/>
<dbReference type="Ensembl" id="ENSOCUT00000033130.1">
    <property type="protein sequence ID" value="ENSOCUP00000026186.1"/>
    <property type="gene ID" value="ENSOCUG00000029105.1"/>
</dbReference>
<dbReference type="GeneID" id="808221"/>
<dbReference type="KEGG" id="ocu:808221"/>
<dbReference type="CTD" id="4537"/>
<dbReference type="eggNOG" id="KOG4662">
    <property type="taxonomic scope" value="Eukaryota"/>
</dbReference>
<dbReference type="GeneTree" id="ENSGT00390000011605"/>
<dbReference type="HOGENOM" id="CLU_119549_3_1_1"/>
<dbReference type="InParanoid" id="O79434"/>
<dbReference type="OMA" id="GPRRYNR"/>
<dbReference type="OrthoDB" id="154075at2759"/>
<dbReference type="TreeFam" id="TF343336"/>
<dbReference type="Proteomes" id="UP000001811">
    <property type="component" value="Mitochondrion"/>
</dbReference>
<dbReference type="Bgee" id="ENSOCUG00000029105">
    <property type="expression patterns" value="Expressed in heart and 17 other cell types or tissues"/>
</dbReference>
<dbReference type="ExpressionAtlas" id="O79434">
    <property type="expression patterns" value="baseline"/>
</dbReference>
<dbReference type="GO" id="GO:0005743">
    <property type="term" value="C:mitochondrial inner membrane"/>
    <property type="evidence" value="ECO:0000250"/>
    <property type="project" value="UniProtKB"/>
</dbReference>
<dbReference type="GO" id="GO:0045271">
    <property type="term" value="C:respiratory chain complex I"/>
    <property type="evidence" value="ECO:0007669"/>
    <property type="project" value="Ensembl"/>
</dbReference>
<dbReference type="GO" id="GO:0008137">
    <property type="term" value="F:NADH dehydrogenase (ubiquinone) activity"/>
    <property type="evidence" value="ECO:0000250"/>
    <property type="project" value="UniProtKB"/>
</dbReference>
<dbReference type="GO" id="GO:0006120">
    <property type="term" value="P:mitochondrial electron transport, NADH to ubiquinone"/>
    <property type="evidence" value="ECO:0000250"/>
    <property type="project" value="UniProtKB"/>
</dbReference>
<dbReference type="FunFam" id="1.20.58.1610:FF:000004">
    <property type="entry name" value="NADH-quinone oxidoreductase subunit A"/>
    <property type="match status" value="1"/>
</dbReference>
<dbReference type="Gene3D" id="1.20.58.1610">
    <property type="entry name" value="NADH:ubiquinone/plastoquinone oxidoreductase, chain 3"/>
    <property type="match status" value="1"/>
</dbReference>
<dbReference type="InterPro" id="IPR000440">
    <property type="entry name" value="NADH_UbQ/plastoQ_OxRdtase_su3"/>
</dbReference>
<dbReference type="InterPro" id="IPR038430">
    <property type="entry name" value="NDAH_ubi_oxred_su3_sf"/>
</dbReference>
<dbReference type="PANTHER" id="PTHR11058">
    <property type="entry name" value="NADH-UBIQUINONE OXIDOREDUCTASE CHAIN 3"/>
    <property type="match status" value="1"/>
</dbReference>
<dbReference type="PANTHER" id="PTHR11058:SF9">
    <property type="entry name" value="NADH-UBIQUINONE OXIDOREDUCTASE CHAIN 3"/>
    <property type="match status" value="1"/>
</dbReference>
<dbReference type="Pfam" id="PF00507">
    <property type="entry name" value="Oxidored_q4"/>
    <property type="match status" value="1"/>
</dbReference>
<keyword id="KW-0249">Electron transport</keyword>
<keyword id="KW-0472">Membrane</keyword>
<keyword id="KW-0496">Mitochondrion</keyword>
<keyword id="KW-0999">Mitochondrion inner membrane</keyword>
<keyword id="KW-0520">NAD</keyword>
<keyword id="KW-1185">Reference proteome</keyword>
<keyword id="KW-0679">Respiratory chain</keyword>
<keyword id="KW-1278">Translocase</keyword>
<keyword id="KW-0812">Transmembrane</keyword>
<keyword id="KW-1133">Transmembrane helix</keyword>
<keyword id="KW-0813">Transport</keyword>
<keyword id="KW-0830">Ubiquinone</keyword>
<protein>
    <recommendedName>
        <fullName evidence="1">NADH-ubiquinone oxidoreductase chain 3</fullName>
        <ecNumber evidence="1">7.1.1.2</ecNumber>
    </recommendedName>
    <alternativeName>
        <fullName>NADH dehydrogenase subunit 3</fullName>
    </alternativeName>
</protein>